<gene>
    <name evidence="1" type="primary">nadD</name>
    <name type="ordered locus">Oter_1760</name>
</gene>
<sequence length="195" mass="22643">MKIGFLGGSFDPVHFGHLIAAQDAFEQFRLDRLILVPAAQAPLKPNDVQSSPEDRFAMLRAAVEWDQRFEVSDVELRRGGTSYTIDSARYFRKQFPRDELYWIIGGDQLPQLHLWRDVSELGQLVDFIFLERPGFPIKARVDIPGLRLHRCDGHLLAISSTELRDRVKRNLSLDYFVPHKAIVYIREKHLYRPSQ</sequence>
<accession>B1ZVV8</accession>
<reference key="1">
    <citation type="journal article" date="2011" name="J. Bacteriol.">
        <title>Genome sequence of the verrucomicrobium Opitutus terrae PB90-1, an abundant inhabitant of rice paddy soil ecosystems.</title>
        <authorList>
            <person name="van Passel M.W."/>
            <person name="Kant R."/>
            <person name="Palva A."/>
            <person name="Copeland A."/>
            <person name="Lucas S."/>
            <person name="Lapidus A."/>
            <person name="Glavina del Rio T."/>
            <person name="Pitluck S."/>
            <person name="Goltsman E."/>
            <person name="Clum A."/>
            <person name="Sun H."/>
            <person name="Schmutz J."/>
            <person name="Larimer F.W."/>
            <person name="Land M.L."/>
            <person name="Hauser L."/>
            <person name="Kyrpides N."/>
            <person name="Mikhailova N."/>
            <person name="Richardson P.P."/>
            <person name="Janssen P.H."/>
            <person name="de Vos W.M."/>
            <person name="Smidt H."/>
        </authorList>
    </citation>
    <scope>NUCLEOTIDE SEQUENCE [LARGE SCALE GENOMIC DNA]</scope>
    <source>
        <strain>DSM 11246 / JCM 15787 / PB90-1</strain>
    </source>
</reference>
<dbReference type="EC" id="2.7.7.18" evidence="1"/>
<dbReference type="EMBL" id="CP001032">
    <property type="protein sequence ID" value="ACB75044.1"/>
    <property type="molecule type" value="Genomic_DNA"/>
</dbReference>
<dbReference type="RefSeq" id="WP_012374581.1">
    <property type="nucleotide sequence ID" value="NC_010571.1"/>
</dbReference>
<dbReference type="SMR" id="B1ZVV8"/>
<dbReference type="STRING" id="452637.Oter_1760"/>
<dbReference type="KEGG" id="ote:Oter_1760"/>
<dbReference type="eggNOG" id="COG1057">
    <property type="taxonomic scope" value="Bacteria"/>
</dbReference>
<dbReference type="HOGENOM" id="CLU_069765_3_1_0"/>
<dbReference type="OrthoDB" id="5295945at2"/>
<dbReference type="UniPathway" id="UPA00253">
    <property type="reaction ID" value="UER00332"/>
</dbReference>
<dbReference type="Proteomes" id="UP000007013">
    <property type="component" value="Chromosome"/>
</dbReference>
<dbReference type="GO" id="GO:0005524">
    <property type="term" value="F:ATP binding"/>
    <property type="evidence" value="ECO:0007669"/>
    <property type="project" value="UniProtKB-KW"/>
</dbReference>
<dbReference type="GO" id="GO:0004515">
    <property type="term" value="F:nicotinate-nucleotide adenylyltransferase activity"/>
    <property type="evidence" value="ECO:0007669"/>
    <property type="project" value="UniProtKB-UniRule"/>
</dbReference>
<dbReference type="GO" id="GO:0009435">
    <property type="term" value="P:NAD biosynthetic process"/>
    <property type="evidence" value="ECO:0007669"/>
    <property type="project" value="UniProtKB-UniRule"/>
</dbReference>
<dbReference type="CDD" id="cd02165">
    <property type="entry name" value="NMNAT"/>
    <property type="match status" value="1"/>
</dbReference>
<dbReference type="Gene3D" id="3.40.50.620">
    <property type="entry name" value="HUPs"/>
    <property type="match status" value="1"/>
</dbReference>
<dbReference type="HAMAP" id="MF_00244">
    <property type="entry name" value="NaMN_adenylyltr"/>
    <property type="match status" value="1"/>
</dbReference>
<dbReference type="InterPro" id="IPR004821">
    <property type="entry name" value="Cyt_trans-like"/>
</dbReference>
<dbReference type="InterPro" id="IPR005248">
    <property type="entry name" value="NadD/NMNAT"/>
</dbReference>
<dbReference type="InterPro" id="IPR014729">
    <property type="entry name" value="Rossmann-like_a/b/a_fold"/>
</dbReference>
<dbReference type="NCBIfam" id="TIGR00125">
    <property type="entry name" value="cyt_tran_rel"/>
    <property type="match status" value="1"/>
</dbReference>
<dbReference type="NCBIfam" id="TIGR00482">
    <property type="entry name" value="nicotinate (nicotinamide) nucleotide adenylyltransferase"/>
    <property type="match status" value="1"/>
</dbReference>
<dbReference type="NCBIfam" id="NF000840">
    <property type="entry name" value="PRK00071.1-3"/>
    <property type="match status" value="1"/>
</dbReference>
<dbReference type="PANTHER" id="PTHR39321">
    <property type="entry name" value="NICOTINATE-NUCLEOTIDE ADENYLYLTRANSFERASE-RELATED"/>
    <property type="match status" value="1"/>
</dbReference>
<dbReference type="PANTHER" id="PTHR39321:SF3">
    <property type="entry name" value="PHOSPHOPANTETHEINE ADENYLYLTRANSFERASE"/>
    <property type="match status" value="1"/>
</dbReference>
<dbReference type="Pfam" id="PF01467">
    <property type="entry name" value="CTP_transf_like"/>
    <property type="match status" value="1"/>
</dbReference>
<dbReference type="SUPFAM" id="SSF52374">
    <property type="entry name" value="Nucleotidylyl transferase"/>
    <property type="match status" value="1"/>
</dbReference>
<name>NADD_OPITP</name>
<comment type="function">
    <text evidence="1">Catalyzes the reversible adenylation of nicotinate mononucleotide (NaMN) to nicotinic acid adenine dinucleotide (NaAD).</text>
</comment>
<comment type="catalytic activity">
    <reaction evidence="1">
        <text>nicotinate beta-D-ribonucleotide + ATP + H(+) = deamido-NAD(+) + diphosphate</text>
        <dbReference type="Rhea" id="RHEA:22860"/>
        <dbReference type="ChEBI" id="CHEBI:15378"/>
        <dbReference type="ChEBI" id="CHEBI:30616"/>
        <dbReference type="ChEBI" id="CHEBI:33019"/>
        <dbReference type="ChEBI" id="CHEBI:57502"/>
        <dbReference type="ChEBI" id="CHEBI:58437"/>
        <dbReference type="EC" id="2.7.7.18"/>
    </reaction>
</comment>
<comment type="pathway">
    <text evidence="1">Cofactor biosynthesis; NAD(+) biosynthesis; deamido-NAD(+) from nicotinate D-ribonucleotide: step 1/1.</text>
</comment>
<comment type="similarity">
    <text evidence="1">Belongs to the NadD family.</text>
</comment>
<evidence type="ECO:0000255" key="1">
    <source>
        <dbReference type="HAMAP-Rule" id="MF_00244"/>
    </source>
</evidence>
<proteinExistence type="inferred from homology"/>
<keyword id="KW-0067">ATP-binding</keyword>
<keyword id="KW-0520">NAD</keyword>
<keyword id="KW-0547">Nucleotide-binding</keyword>
<keyword id="KW-0548">Nucleotidyltransferase</keyword>
<keyword id="KW-0662">Pyridine nucleotide biosynthesis</keyword>
<keyword id="KW-1185">Reference proteome</keyword>
<keyword id="KW-0808">Transferase</keyword>
<feature type="chain" id="PRO_1000192239" description="Probable nicotinate-nucleotide adenylyltransferase">
    <location>
        <begin position="1"/>
        <end position="195"/>
    </location>
</feature>
<protein>
    <recommendedName>
        <fullName evidence="1">Probable nicotinate-nucleotide adenylyltransferase</fullName>
        <ecNumber evidence="1">2.7.7.18</ecNumber>
    </recommendedName>
    <alternativeName>
        <fullName evidence="1">Deamido-NAD(+) diphosphorylase</fullName>
    </alternativeName>
    <alternativeName>
        <fullName evidence="1">Deamido-NAD(+) pyrophosphorylase</fullName>
    </alternativeName>
    <alternativeName>
        <fullName evidence="1">Nicotinate mononucleotide adenylyltransferase</fullName>
        <shortName evidence="1">NaMN adenylyltransferase</shortName>
    </alternativeName>
</protein>
<organism>
    <name type="scientific">Opitutus terrae (strain DSM 11246 / JCM 15787 / PB90-1)</name>
    <dbReference type="NCBI Taxonomy" id="452637"/>
    <lineage>
        <taxon>Bacteria</taxon>
        <taxon>Pseudomonadati</taxon>
        <taxon>Verrucomicrobiota</taxon>
        <taxon>Opitutia</taxon>
        <taxon>Opitutales</taxon>
        <taxon>Opitutaceae</taxon>
        <taxon>Opitutus</taxon>
    </lineage>
</organism>